<reference key="1">
    <citation type="submission" date="2008-02" db="EMBL/GenBank/DDBJ databases">
        <title>Complete sequence of chromosome 1 of Burkholderia cenocepacia MC0-3.</title>
        <authorList>
            <person name="Copeland A."/>
            <person name="Lucas S."/>
            <person name="Lapidus A."/>
            <person name="Barry K."/>
            <person name="Bruce D."/>
            <person name="Goodwin L."/>
            <person name="Glavina del Rio T."/>
            <person name="Dalin E."/>
            <person name="Tice H."/>
            <person name="Pitluck S."/>
            <person name="Chain P."/>
            <person name="Malfatti S."/>
            <person name="Shin M."/>
            <person name="Vergez L."/>
            <person name="Schmutz J."/>
            <person name="Larimer F."/>
            <person name="Land M."/>
            <person name="Hauser L."/>
            <person name="Kyrpides N."/>
            <person name="Mikhailova N."/>
            <person name="Tiedje J."/>
            <person name="Richardson P."/>
        </authorList>
    </citation>
    <scope>NUCLEOTIDE SEQUENCE [LARGE SCALE GENOMIC DNA]</scope>
    <source>
        <strain>MC0-3</strain>
    </source>
</reference>
<protein>
    <recommendedName>
        <fullName evidence="1">UPF0246 protein Bcenmc03_2247</fullName>
    </recommendedName>
</protein>
<proteinExistence type="inferred from homology"/>
<feature type="chain" id="PRO_1000131102" description="UPF0246 protein Bcenmc03_2247">
    <location>
        <begin position="1"/>
        <end position="260"/>
    </location>
</feature>
<comment type="similarity">
    <text evidence="1">Belongs to the UPF0246 family.</text>
</comment>
<sequence length="260" mass="29093">MIIVLSPAKSLDYETPAHVEAYTKPAFVDDASELIDGLRKLSPQDIAALMDISDPLARLNFQRYADWSSTFTPANAKQAVLAFNGDVYEGFDAKSLSSTDLDYAQQHVRVLSGLYGLLRPLDLLQPYRLEMGTRFANARGKDLYAFWGDRITRALNEQLETRSGAARVLVNCASTEYFKSVKPKLLAAPVITPVFEDWKGGRYKIISFHAKRARGLMARFVVENRITDPNALKAFSTEGYVFDAAASNDSTYVYRRRVGE</sequence>
<accession>B1JVL5</accession>
<dbReference type="EMBL" id="CP000958">
    <property type="protein sequence ID" value="ACA91408.1"/>
    <property type="molecule type" value="Genomic_DNA"/>
</dbReference>
<dbReference type="SMR" id="B1JVL5"/>
<dbReference type="GeneID" id="83049035"/>
<dbReference type="KEGG" id="bcm:Bcenmc03_2247"/>
<dbReference type="HOGENOM" id="CLU_061989_0_0_4"/>
<dbReference type="Proteomes" id="UP000002169">
    <property type="component" value="Chromosome 1"/>
</dbReference>
<dbReference type="GO" id="GO:0005829">
    <property type="term" value="C:cytosol"/>
    <property type="evidence" value="ECO:0007669"/>
    <property type="project" value="TreeGrafter"/>
</dbReference>
<dbReference type="GO" id="GO:0033194">
    <property type="term" value="P:response to hydroperoxide"/>
    <property type="evidence" value="ECO:0007669"/>
    <property type="project" value="TreeGrafter"/>
</dbReference>
<dbReference type="HAMAP" id="MF_00652">
    <property type="entry name" value="UPF0246"/>
    <property type="match status" value="1"/>
</dbReference>
<dbReference type="InterPro" id="IPR005583">
    <property type="entry name" value="YaaA"/>
</dbReference>
<dbReference type="NCBIfam" id="NF002541">
    <property type="entry name" value="PRK02101.1-1"/>
    <property type="match status" value="1"/>
</dbReference>
<dbReference type="NCBIfam" id="NF002542">
    <property type="entry name" value="PRK02101.1-3"/>
    <property type="match status" value="1"/>
</dbReference>
<dbReference type="PANTHER" id="PTHR30283:SF4">
    <property type="entry name" value="PEROXIDE STRESS RESISTANCE PROTEIN YAAA"/>
    <property type="match status" value="1"/>
</dbReference>
<dbReference type="PANTHER" id="PTHR30283">
    <property type="entry name" value="PEROXIDE STRESS RESPONSE PROTEIN YAAA"/>
    <property type="match status" value="1"/>
</dbReference>
<dbReference type="Pfam" id="PF03883">
    <property type="entry name" value="H2O2_YaaD"/>
    <property type="match status" value="1"/>
</dbReference>
<name>Y2247_BURO0</name>
<gene>
    <name type="ordered locus">Bcenmc03_2247</name>
</gene>
<organism>
    <name type="scientific">Burkholderia orbicola (strain MC0-3)</name>
    <dbReference type="NCBI Taxonomy" id="406425"/>
    <lineage>
        <taxon>Bacteria</taxon>
        <taxon>Pseudomonadati</taxon>
        <taxon>Pseudomonadota</taxon>
        <taxon>Betaproteobacteria</taxon>
        <taxon>Burkholderiales</taxon>
        <taxon>Burkholderiaceae</taxon>
        <taxon>Burkholderia</taxon>
        <taxon>Burkholderia cepacia complex</taxon>
        <taxon>Burkholderia orbicola</taxon>
    </lineage>
</organism>
<evidence type="ECO:0000255" key="1">
    <source>
        <dbReference type="HAMAP-Rule" id="MF_00652"/>
    </source>
</evidence>